<accession>Q9RQ01</accession>
<organism>
    <name type="scientific">Xanthobacter autotrophicus</name>
    <dbReference type="NCBI Taxonomy" id="280"/>
    <lineage>
        <taxon>Bacteria</taxon>
        <taxon>Pseudomonadati</taxon>
        <taxon>Pseudomonadota</taxon>
        <taxon>Alphaproteobacteria</taxon>
        <taxon>Hyphomicrobiales</taxon>
        <taxon>Xanthobacteraceae</taxon>
        <taxon>Xanthobacter</taxon>
    </lineage>
</organism>
<dbReference type="EC" id="3.5.4.27"/>
<dbReference type="EMBL" id="AF139593">
    <property type="protein sequence ID" value="AAD55896.1"/>
    <property type="molecule type" value="Genomic_DNA"/>
</dbReference>
<dbReference type="SMR" id="Q9RQ01"/>
<dbReference type="UniPathway" id="UPA00562">
    <property type="reaction ID" value="UER00703"/>
</dbReference>
<dbReference type="GO" id="GO:0005737">
    <property type="term" value="C:cytoplasm"/>
    <property type="evidence" value="ECO:0007669"/>
    <property type="project" value="UniProtKB-SubCell"/>
</dbReference>
<dbReference type="GO" id="GO:0018759">
    <property type="term" value="F:methenyltetrahydromethanopterin cyclohydrolase activity"/>
    <property type="evidence" value="ECO:0007669"/>
    <property type="project" value="UniProtKB-UniRule"/>
</dbReference>
<dbReference type="GO" id="GO:0046294">
    <property type="term" value="P:formaldehyde catabolic process"/>
    <property type="evidence" value="ECO:0007669"/>
    <property type="project" value="UniProtKB-UniRule"/>
</dbReference>
<dbReference type="GO" id="GO:0006730">
    <property type="term" value="P:one-carbon metabolic process"/>
    <property type="evidence" value="ECO:0007669"/>
    <property type="project" value="UniProtKB-UniRule"/>
</dbReference>
<dbReference type="CDD" id="cd00545">
    <property type="entry name" value="MCH"/>
    <property type="match status" value="1"/>
</dbReference>
<dbReference type="Gene3D" id="3.10.340.11">
    <property type="entry name" value="Methenyltetrahydromethanopterin Cyclohydrolase, Chain A, domain 1"/>
    <property type="match status" value="1"/>
</dbReference>
<dbReference type="Gene3D" id="3.30.1030.10">
    <property type="entry name" value="Methenyltetrahydromethanopterin Cyclohydrolase, Chain A, domain 2"/>
    <property type="match status" value="1"/>
</dbReference>
<dbReference type="HAMAP" id="MF_00486">
    <property type="entry name" value="McH"/>
    <property type="match status" value="1"/>
</dbReference>
<dbReference type="InterPro" id="IPR003209">
    <property type="entry name" value="METHMP_CycHdrlase"/>
</dbReference>
<dbReference type="NCBIfam" id="TIGR03120">
    <property type="entry name" value="one_C_mch"/>
    <property type="match status" value="1"/>
</dbReference>
<dbReference type="Pfam" id="PF02289">
    <property type="entry name" value="MCH"/>
    <property type="match status" value="1"/>
</dbReference>
<dbReference type="SUPFAM" id="SSF56199">
    <property type="entry name" value="Methenyltetrahydromethanopterin cyclohydrolase"/>
    <property type="match status" value="1"/>
</dbReference>
<feature type="chain" id="PRO_0000140898" description="Methenyltetrahydromethanopterin cyclohydrolase">
    <location>
        <begin position="1"/>
        <end position="337"/>
    </location>
</feature>
<evidence type="ECO:0000250" key="1"/>
<evidence type="ECO:0000305" key="2"/>
<reference key="1">
    <citation type="journal article" date="1999" name="J. Bacteriol.">
        <title>Distribution of tetrahydromethanopterin-dependent enzymes in methylotrophic bacteria and phylogeny of methenyl tetrahydromethanopterin cyclohydrolases.</title>
        <authorList>
            <person name="Vorholt J.A."/>
            <person name="Chistoserdova L.V."/>
            <person name="Stolyar S.M."/>
            <person name="Thauer R.K."/>
            <person name="Lidstrom M.E."/>
        </authorList>
    </citation>
    <scope>NUCLEOTIDE SEQUENCE [GENOMIC DNA]</scope>
    <source>
        <strain>ATCC 35674 / DSM 432 / JCM 1202 / LMG 7043</strain>
    </source>
</reference>
<keyword id="KW-0963">Cytoplasm</keyword>
<keyword id="KW-0378">Hydrolase</keyword>
<keyword id="KW-0554">One-carbon metabolism</keyword>
<protein>
    <recommendedName>
        <fullName>Methenyltetrahydromethanopterin cyclohydrolase</fullName>
        <ecNumber>3.5.4.27</ecNumber>
    </recommendedName>
    <alternativeName>
        <fullName>Methenyl-H4MPT cyclohydrolase</fullName>
    </alternativeName>
</protein>
<proteinExistence type="inferred from homology"/>
<gene>
    <name type="primary">mch</name>
</gene>
<comment type="function">
    <text evidence="1">Catalyzes the hydrolysis of methenyl-H(4)MPT(+) to 5-formyl-H(4)MPT.</text>
</comment>
<comment type="catalytic activity">
    <reaction>
        <text>5,10-methenyl-5,6,7,8-tetrahydromethanopterin + H2O = N(5)-formyl-5,6,7,8-tetrahydromethanopterin + H(+)</text>
        <dbReference type="Rhea" id="RHEA:19053"/>
        <dbReference type="ChEBI" id="CHEBI:15377"/>
        <dbReference type="ChEBI" id="CHEBI:15378"/>
        <dbReference type="ChEBI" id="CHEBI:58018"/>
        <dbReference type="ChEBI" id="CHEBI:58337"/>
        <dbReference type="EC" id="3.5.4.27"/>
    </reaction>
</comment>
<comment type="pathway">
    <text>One-carbon metabolism; formaldehyde degradation; formate from formaldehyde (H(4)MPT route): step 3/5.</text>
</comment>
<comment type="subcellular location">
    <subcellularLocation>
        <location evidence="1">Cytoplasm</location>
    </subcellularLocation>
</comment>
<comment type="similarity">
    <text evidence="2">Belongs to the MCH family.</text>
</comment>
<name>MCH_XANAU</name>
<sequence>MTSQATSQATSPALTTPVDAAPQISLATCVAPLVEALIRDADALRLKVSRGPRDALIVDAGITAAGGLEAGRRIAEICLGGLGRVALVPTGRFSPWDTLASVSTSGPVLACLGSQYAGWSLAAGDFFALGSGPGRAIAAVETLYGELGYRDRGEKVVLVLETAVVPPAEVVDEIAARCAVAPSDITLILTPTSSLAGTVQIVARVLEVALHKAHALHFPLEHIADGVGSAPICPPSPDFLTAMGRTNDAVLYGGDVHLFVHGPAEAAKDLATRLPSLASRDYGRPFGEIFAGYDCDFYKVDPLLFSPARVTVTAIDHGESFTAGGFDPILIARSFGG</sequence>